<feature type="chain" id="PRO_5000112287" description="Urease accessory protein UreF">
    <location>
        <begin position="1"/>
        <end position="243"/>
    </location>
</feature>
<name>UREF_RHOPS</name>
<sequence length="243" mass="25518">MSTSRAPETTSAAPLSAEQSASLYRLMTWLSPAFPVGAFSYSSGLEWAVEAGDVIDAPSLRDWLTAMLEHGAGFCDGVFLAHAYRAVAAADETALRHVAELATAFVPSAERHLETTAQGKAFIEIVRNAWPSDGLACAVDACAGALAYPVAVGLVSATHGVPLAATLHAFLHAVVSNWISAGARLVPLGQTDSQRVLAALEPAVIAAGDRAREASLDDLGSATFRADLASLRHETQYTRLFRS</sequence>
<keyword id="KW-0143">Chaperone</keyword>
<keyword id="KW-0963">Cytoplasm</keyword>
<keyword id="KW-0996">Nickel insertion</keyword>
<proteinExistence type="inferred from homology"/>
<reference key="1">
    <citation type="submission" date="2006-03" db="EMBL/GenBank/DDBJ databases">
        <title>Complete sequence of Rhodopseudomonas palustris BisB5.</title>
        <authorList>
            <consortium name="US DOE Joint Genome Institute"/>
            <person name="Copeland A."/>
            <person name="Lucas S."/>
            <person name="Lapidus A."/>
            <person name="Barry K."/>
            <person name="Detter J.C."/>
            <person name="Glavina del Rio T."/>
            <person name="Hammon N."/>
            <person name="Israni S."/>
            <person name="Dalin E."/>
            <person name="Tice H."/>
            <person name="Pitluck S."/>
            <person name="Chain P."/>
            <person name="Malfatti S."/>
            <person name="Shin M."/>
            <person name="Vergez L."/>
            <person name="Schmutz J."/>
            <person name="Larimer F."/>
            <person name="Land M."/>
            <person name="Hauser L."/>
            <person name="Pelletier D.A."/>
            <person name="Kyrpides N."/>
            <person name="Lykidis A."/>
            <person name="Oda Y."/>
            <person name="Harwood C.S."/>
            <person name="Richardson P."/>
        </authorList>
    </citation>
    <scope>NUCLEOTIDE SEQUENCE [LARGE SCALE GENOMIC DNA]</scope>
    <source>
        <strain>BisB5</strain>
    </source>
</reference>
<dbReference type="EMBL" id="CP000283">
    <property type="protein sequence ID" value="ABE40720.1"/>
    <property type="status" value="ALT_INIT"/>
    <property type="molecule type" value="Genomic_DNA"/>
</dbReference>
<dbReference type="SMR" id="Q133L9"/>
<dbReference type="STRING" id="316057.RPD_3497"/>
<dbReference type="KEGG" id="rpd:RPD_3497"/>
<dbReference type="eggNOG" id="COG0830">
    <property type="taxonomic scope" value="Bacteria"/>
</dbReference>
<dbReference type="HOGENOM" id="CLU_049215_2_0_5"/>
<dbReference type="BioCyc" id="RPAL316057:RPD_RS17580-MONOMER"/>
<dbReference type="Proteomes" id="UP000001818">
    <property type="component" value="Chromosome"/>
</dbReference>
<dbReference type="GO" id="GO:0005737">
    <property type="term" value="C:cytoplasm"/>
    <property type="evidence" value="ECO:0007669"/>
    <property type="project" value="UniProtKB-SubCell"/>
</dbReference>
<dbReference type="GO" id="GO:0016151">
    <property type="term" value="F:nickel cation binding"/>
    <property type="evidence" value="ECO:0007669"/>
    <property type="project" value="UniProtKB-UniRule"/>
</dbReference>
<dbReference type="Gene3D" id="1.10.4190.10">
    <property type="entry name" value="Urease accessory protein UreF"/>
    <property type="match status" value="1"/>
</dbReference>
<dbReference type="HAMAP" id="MF_01385">
    <property type="entry name" value="UreF"/>
    <property type="match status" value="1"/>
</dbReference>
<dbReference type="InterPro" id="IPR002639">
    <property type="entry name" value="UreF"/>
</dbReference>
<dbReference type="InterPro" id="IPR038277">
    <property type="entry name" value="UreF_sf"/>
</dbReference>
<dbReference type="PANTHER" id="PTHR33620">
    <property type="entry name" value="UREASE ACCESSORY PROTEIN F"/>
    <property type="match status" value="1"/>
</dbReference>
<dbReference type="PANTHER" id="PTHR33620:SF1">
    <property type="entry name" value="UREASE ACCESSORY PROTEIN F"/>
    <property type="match status" value="1"/>
</dbReference>
<dbReference type="Pfam" id="PF01730">
    <property type="entry name" value="UreF"/>
    <property type="match status" value="1"/>
</dbReference>
<dbReference type="PIRSF" id="PIRSF009467">
    <property type="entry name" value="Ureas_acces_UreF"/>
    <property type="match status" value="1"/>
</dbReference>
<organism>
    <name type="scientific">Rhodopseudomonas palustris (strain BisB5)</name>
    <dbReference type="NCBI Taxonomy" id="316057"/>
    <lineage>
        <taxon>Bacteria</taxon>
        <taxon>Pseudomonadati</taxon>
        <taxon>Pseudomonadota</taxon>
        <taxon>Alphaproteobacteria</taxon>
        <taxon>Hyphomicrobiales</taxon>
        <taxon>Nitrobacteraceae</taxon>
        <taxon>Rhodopseudomonas</taxon>
    </lineage>
</organism>
<comment type="function">
    <text evidence="1">Required for maturation of urease via the functional incorporation of the urease nickel metallocenter.</text>
</comment>
<comment type="subunit">
    <text evidence="1">UreD, UreF and UreG form a complex that acts as a GTP-hydrolysis-dependent molecular chaperone, activating the urease apoprotein by helping to assemble the nickel containing metallocenter of UreC. The UreE protein probably delivers the nickel.</text>
</comment>
<comment type="subcellular location">
    <subcellularLocation>
        <location evidence="1">Cytoplasm</location>
    </subcellularLocation>
</comment>
<comment type="similarity">
    <text evidence="1">Belongs to the UreF family.</text>
</comment>
<comment type="sequence caution" evidence="2">
    <conflict type="erroneous initiation">
        <sequence resource="EMBL-CDS" id="ABE40720"/>
    </conflict>
</comment>
<protein>
    <recommendedName>
        <fullName evidence="1">Urease accessory protein UreF</fullName>
    </recommendedName>
</protein>
<gene>
    <name evidence="1" type="primary">ureF</name>
    <name type="ordered locus">RPD_3497</name>
</gene>
<accession>Q133L9</accession>
<evidence type="ECO:0000255" key="1">
    <source>
        <dbReference type="HAMAP-Rule" id="MF_01385"/>
    </source>
</evidence>
<evidence type="ECO:0000305" key="2"/>